<sequence length="215" mass="24460">MAENEPQVQFKLVLVGDGGTGKTTFVKRHLTGEFEKKYVATLGVEVHPLVFHTNRGAIKYNVWDTAGQEKFGGLRDGYYIQAQCAIIMFDVTSRVTYKNVPNWHRDLVRVCENIPIVLCGNKVDIKDRKVKAKSIVFHRKKNLQYYDISAKSNYNFEKPFLWLARKLIGDPNLEFVEMPALAPPEIAMDPTLAAQYEHDLKVASETALPDEDDDL</sequence>
<proteinExistence type="evidence at transcript level"/>
<dbReference type="EC" id="3.6.5.-" evidence="2"/>
<dbReference type="EMBL" id="U61395">
    <property type="protein sequence ID" value="AAB97093.1"/>
    <property type="molecule type" value="mRNA"/>
</dbReference>
<dbReference type="EMBL" id="BC050517">
    <property type="protein sequence ID" value="AAH50517.2"/>
    <property type="molecule type" value="mRNA"/>
</dbReference>
<dbReference type="RefSeq" id="NP_571384.1">
    <property type="nucleotide sequence ID" value="NM_131309.3"/>
</dbReference>
<dbReference type="RefSeq" id="XP_005173151.1">
    <property type="nucleotide sequence ID" value="XM_005173094.5"/>
</dbReference>
<dbReference type="SMR" id="P79735"/>
<dbReference type="FunCoup" id="P79735">
    <property type="interactions" value="3115"/>
</dbReference>
<dbReference type="STRING" id="7955.ENSDARP00000108629"/>
<dbReference type="PaxDb" id="7955-ENSDARP00000108629"/>
<dbReference type="Ensembl" id="ENSDART00000034438">
    <property type="protein sequence ID" value="ENSDARP00000032532"/>
    <property type="gene ID" value="ENSDARG00000057026"/>
</dbReference>
<dbReference type="Ensembl" id="ENSDART00000128717">
    <property type="protein sequence ID" value="ENSDARP00000108629"/>
    <property type="gene ID" value="ENSDARG00000057026"/>
</dbReference>
<dbReference type="Ensembl" id="ENSDART00000144503">
    <property type="protein sequence ID" value="ENSDARP00000121831"/>
    <property type="gene ID" value="ENSDARG00000057026"/>
</dbReference>
<dbReference type="GeneID" id="30572"/>
<dbReference type="KEGG" id="dre:30572"/>
<dbReference type="AGR" id="ZFIN:ZDB-GENE-990415-88"/>
<dbReference type="CTD" id="5901"/>
<dbReference type="ZFIN" id="ZDB-GENE-990415-88">
    <property type="gene designation" value="ran"/>
</dbReference>
<dbReference type="eggNOG" id="KOG0096">
    <property type="taxonomic scope" value="Eukaryota"/>
</dbReference>
<dbReference type="HOGENOM" id="CLU_041217_13_0_1"/>
<dbReference type="InParanoid" id="P79735"/>
<dbReference type="OMA" id="FNAWDTA"/>
<dbReference type="OrthoDB" id="48625at2759"/>
<dbReference type="PhylomeDB" id="P79735"/>
<dbReference type="TreeFam" id="TF106302"/>
<dbReference type="Reactome" id="R-DRE-9615933">
    <property type="pathway name" value="Postmitotic nuclear pore complex (NPC) reformation"/>
</dbReference>
<dbReference type="PRO" id="PR:P79735"/>
<dbReference type="Proteomes" id="UP000000437">
    <property type="component" value="Chromosome 14"/>
</dbReference>
<dbReference type="Bgee" id="ENSDARG00000057026">
    <property type="expression patterns" value="Expressed in gastrula and 54 other cell types or tissues"/>
</dbReference>
<dbReference type="ExpressionAtlas" id="P79735">
    <property type="expression patterns" value="baseline and differential"/>
</dbReference>
<dbReference type="GO" id="GO:0005737">
    <property type="term" value="C:cytoplasm"/>
    <property type="evidence" value="ECO:0000318"/>
    <property type="project" value="GO_Central"/>
</dbReference>
<dbReference type="GO" id="GO:0005829">
    <property type="term" value="C:cytosol"/>
    <property type="evidence" value="ECO:0007669"/>
    <property type="project" value="UniProtKB-SubCell"/>
</dbReference>
<dbReference type="GO" id="GO:0005635">
    <property type="term" value="C:nuclear envelope"/>
    <property type="evidence" value="ECO:0007669"/>
    <property type="project" value="UniProtKB-SubCell"/>
</dbReference>
<dbReference type="GO" id="GO:0005634">
    <property type="term" value="C:nucleus"/>
    <property type="evidence" value="ECO:0000250"/>
    <property type="project" value="UniProtKB"/>
</dbReference>
<dbReference type="GO" id="GO:0005525">
    <property type="term" value="F:GTP binding"/>
    <property type="evidence" value="ECO:0000250"/>
    <property type="project" value="UniProtKB"/>
</dbReference>
<dbReference type="GO" id="GO:0003924">
    <property type="term" value="F:GTPase activity"/>
    <property type="evidence" value="ECO:0000250"/>
    <property type="project" value="UniProtKB"/>
</dbReference>
<dbReference type="GO" id="GO:0000287">
    <property type="term" value="F:magnesium ion binding"/>
    <property type="evidence" value="ECO:0000250"/>
    <property type="project" value="UniProtKB"/>
</dbReference>
<dbReference type="GO" id="GO:0046039">
    <property type="term" value="P:GTP metabolic process"/>
    <property type="evidence" value="ECO:0000250"/>
    <property type="project" value="UniProtKB"/>
</dbReference>
<dbReference type="GO" id="GO:0000070">
    <property type="term" value="P:mitotic sister chromatid segregation"/>
    <property type="evidence" value="ECO:0000250"/>
    <property type="project" value="UniProtKB"/>
</dbReference>
<dbReference type="GO" id="GO:0003407">
    <property type="term" value="P:neural retina development"/>
    <property type="evidence" value="ECO:0000315"/>
    <property type="project" value="ZFIN"/>
</dbReference>
<dbReference type="GO" id="GO:0006606">
    <property type="term" value="P:protein import into nucleus"/>
    <property type="evidence" value="ECO:0000250"/>
    <property type="project" value="UniProtKB"/>
</dbReference>
<dbReference type="GO" id="GO:0060041">
    <property type="term" value="P:retina development in camera-type eye"/>
    <property type="evidence" value="ECO:0000315"/>
    <property type="project" value="ZFIN"/>
</dbReference>
<dbReference type="GO" id="GO:0000054">
    <property type="term" value="P:ribosomal subunit export from nucleus"/>
    <property type="evidence" value="ECO:0000318"/>
    <property type="project" value="GO_Central"/>
</dbReference>
<dbReference type="GO" id="GO:0061015">
    <property type="term" value="P:snRNA import into nucleus"/>
    <property type="evidence" value="ECO:0000250"/>
    <property type="project" value="UniProtKB"/>
</dbReference>
<dbReference type="CDD" id="cd00877">
    <property type="entry name" value="Ran"/>
    <property type="match status" value="1"/>
</dbReference>
<dbReference type="FunFam" id="3.40.50.300:FF:000131">
    <property type="entry name" value="GTP-binding nuclear protein Ran"/>
    <property type="match status" value="1"/>
</dbReference>
<dbReference type="Gene3D" id="3.40.50.300">
    <property type="entry name" value="P-loop containing nucleotide triphosphate hydrolases"/>
    <property type="match status" value="1"/>
</dbReference>
<dbReference type="InterPro" id="IPR027417">
    <property type="entry name" value="P-loop_NTPase"/>
</dbReference>
<dbReference type="InterPro" id="IPR002041">
    <property type="entry name" value="Ran_GTPase"/>
</dbReference>
<dbReference type="InterPro" id="IPR005225">
    <property type="entry name" value="Small_GTP-bd"/>
</dbReference>
<dbReference type="InterPro" id="IPR001806">
    <property type="entry name" value="Small_GTPase"/>
</dbReference>
<dbReference type="NCBIfam" id="TIGR00231">
    <property type="entry name" value="small_GTP"/>
    <property type="match status" value="1"/>
</dbReference>
<dbReference type="PANTHER" id="PTHR24071:SF17">
    <property type="entry name" value="GTP-BINDING NUCLEAR PROTEIN RAN"/>
    <property type="match status" value="1"/>
</dbReference>
<dbReference type="PANTHER" id="PTHR24071">
    <property type="entry name" value="RAN GTPASE"/>
    <property type="match status" value="1"/>
</dbReference>
<dbReference type="Pfam" id="PF00071">
    <property type="entry name" value="Ras"/>
    <property type="match status" value="1"/>
</dbReference>
<dbReference type="PRINTS" id="PR00627">
    <property type="entry name" value="GTPRANTC4"/>
</dbReference>
<dbReference type="SMART" id="SM00175">
    <property type="entry name" value="RAB"/>
    <property type="match status" value="1"/>
</dbReference>
<dbReference type="SMART" id="SM00176">
    <property type="entry name" value="RAN"/>
    <property type="match status" value="1"/>
</dbReference>
<dbReference type="SMART" id="SM00173">
    <property type="entry name" value="RAS"/>
    <property type="match status" value="1"/>
</dbReference>
<dbReference type="SMART" id="SM00174">
    <property type="entry name" value="RHO"/>
    <property type="match status" value="1"/>
</dbReference>
<dbReference type="SUPFAM" id="SSF52540">
    <property type="entry name" value="P-loop containing nucleoside triphosphate hydrolases"/>
    <property type="match status" value="1"/>
</dbReference>
<dbReference type="PROSITE" id="PS51418">
    <property type="entry name" value="RAN"/>
    <property type="match status" value="1"/>
</dbReference>
<reference key="1">
    <citation type="journal article" date="1997" name="DNA Seq.">
        <title>An abundant zebrafish cDNA clone encodes a ras-like protein which is expressed ubiquitously.</title>
        <authorList>
            <person name="Liao J."/>
            <person name="He J."/>
            <person name="Gong Z."/>
        </authorList>
    </citation>
    <scope>NUCLEOTIDE SEQUENCE [MRNA]</scope>
    <scope>TISSUE SPECIFICITY</scope>
    <scope>DEVELOPMENTAL STAGE</scope>
</reference>
<reference key="2">
    <citation type="submission" date="2003-04" db="EMBL/GenBank/DDBJ databases">
        <authorList>
            <consortium name="NIH - Zebrafish Gene Collection (ZGC) project"/>
        </authorList>
    </citation>
    <scope>NUCLEOTIDE SEQUENCE [LARGE SCALE MRNA]</scope>
</reference>
<evidence type="ECO:0000250" key="1">
    <source>
        <dbReference type="UniProtKB" id="P62825"/>
    </source>
</evidence>
<evidence type="ECO:0000250" key="2">
    <source>
        <dbReference type="UniProtKB" id="P62826"/>
    </source>
</evidence>
<evidence type="ECO:0000250" key="3">
    <source>
        <dbReference type="UniProtKB" id="P62827"/>
    </source>
</evidence>
<evidence type="ECO:0000255" key="4">
    <source>
        <dbReference type="PROSITE-ProRule" id="PRU00752"/>
    </source>
</evidence>
<evidence type="ECO:0000269" key="5">
    <source>
    </source>
</evidence>
<evidence type="ECO:0000305" key="6"/>
<feature type="chain" id="PRO_0000208704" description="GTP-binding nuclear protein Ran">
    <location>
        <begin position="1"/>
        <end position="215"/>
    </location>
</feature>
<feature type="domain" description="Small GTPase Ran-type" evidence="4">
    <location>
        <begin position="6"/>
        <end position="170"/>
    </location>
</feature>
<feature type="region of interest" description="Switch-I" evidence="4">
    <location>
        <begin position="36"/>
        <end position="44"/>
    </location>
</feature>
<feature type="region of interest" description="Switch-II" evidence="4">
    <location>
        <begin position="67"/>
        <end position="83"/>
    </location>
</feature>
<feature type="region of interest" description="Interaction with RANBP1" evidence="2">
    <location>
        <begin position="210"/>
        <end position="215"/>
    </location>
</feature>
<feature type="binding site" evidence="1">
    <location>
        <begin position="17"/>
        <end position="24"/>
    </location>
    <ligand>
        <name>GTP</name>
        <dbReference type="ChEBI" id="CHEBI:37565"/>
    </ligand>
</feature>
<feature type="binding site" evidence="1">
    <location>
        <begin position="35"/>
        <end position="41"/>
    </location>
    <ligand>
        <name>GTP</name>
        <dbReference type="ChEBI" id="CHEBI:37565"/>
    </ligand>
</feature>
<feature type="binding site" evidence="1">
    <location>
        <position position="67"/>
    </location>
    <ligand>
        <name>GTP</name>
        <dbReference type="ChEBI" id="CHEBI:37565"/>
    </ligand>
</feature>
<feature type="binding site" evidence="1">
    <location>
        <begin position="121"/>
        <end position="124"/>
    </location>
    <ligand>
        <name>GTP</name>
        <dbReference type="ChEBI" id="CHEBI:37565"/>
    </ligand>
</feature>
<feature type="binding site" evidence="1">
    <location>
        <begin position="149"/>
        <end position="151"/>
    </location>
    <ligand>
        <name>GTP</name>
        <dbReference type="ChEBI" id="CHEBI:37565"/>
    </ligand>
</feature>
<feature type="site" description="Essential for GTP hydrolysis" evidence="2">
    <location>
        <position position="68"/>
    </location>
</feature>
<comment type="function">
    <text evidence="2">GTPase involved in nucleocytoplasmic transport, participating both to the import and the export from the nucleus of proteins and RNAs. Switches between a cytoplasmic GDP- and a nuclear GTP-bound state by nucleotide exchange and GTP hydrolysis. Nuclear import receptors such as importin beta bind their substrates only in the absence of GTP-bound RAN and release them upon direct interaction with GTP-bound RAN, while export receptors behave in the opposite way. Thereby, RAN controls cargo loading and release by transport receptors in the proper compartment and ensures the directionality of the transport. Interaction with RANBP1 induces a conformation change in the complex formed by XPO1 and RAN that triggers the release of the nuclear export signal of cargo proteins. RAN (GTP-bound form) triggers microtubule assembly at mitotic chromosomes and is required for normal mitotic spindle assembly and chromosome segregation. Required for normal progress through mitosis.</text>
</comment>
<comment type="catalytic activity">
    <reaction evidence="2">
        <text>GTP + H2O = GDP + phosphate + H(+)</text>
        <dbReference type="Rhea" id="RHEA:19669"/>
        <dbReference type="ChEBI" id="CHEBI:15377"/>
        <dbReference type="ChEBI" id="CHEBI:15378"/>
        <dbReference type="ChEBI" id="CHEBI:37565"/>
        <dbReference type="ChEBI" id="CHEBI:43474"/>
        <dbReference type="ChEBI" id="CHEBI:58189"/>
    </reaction>
    <physiologicalReaction direction="left-to-right" evidence="2">
        <dbReference type="Rhea" id="RHEA:19670"/>
    </physiologicalReaction>
</comment>
<comment type="cofactor">
    <cofactor evidence="2">
        <name>Mg(2+)</name>
        <dbReference type="ChEBI" id="CHEBI:18420"/>
    </cofactor>
    <text evidence="2">Mg(2+) interacts primarily with the phosphate groups of the bound guanine nucleotide.</text>
</comment>
<comment type="subunit">
    <text evidence="1 2 3">Monomer. Interacts with rangap1, which promotes ran-mediated GTP hydrolysis. Interacts with kpnb1. Interaction with kpnb1 inhibits rangap1-mediated stimulation of GTPase activity. Interacts with rcc1 which promotes the exchange of ran-bound GDP by GTP. Interaction with kpnb1 inhibits rcc1-mediated exchange of ran-bound GDP by GTP. Interacts (GTP-bound form) with tnpo1; the interaction is direct. Interacts (GTP-bound form) with tnpo3; the interaction is direct. Interacts with kpnb1 and with tnpo1; both inhibit ran GTPase activity. Interacts (via C-terminus) with ranbp1, which alleviates the inhibition of ran GTPase activity. Interacts with rangrf, which promotes the release of bound guanine nucleotide. Rangrf and rcc1 compete for an overlapping binding site on ran. Identified in a complex with kpna2 and cse1l; interaction with ranbp1 mediates dissociation of ran from this complex. Interaction with both ranbp1 and kpna2 promotes dissociation of the complex between ran and kpnb1. Identified in a complex composed of ran, rangap1 and ranbp1. Identified in a complex that contains tnpo1, ran and ranbp1. Identified in a nuclear export complex with xpo1. Interaction with ranbp1 or ranbp2 induces a conformation change in the complex formed by xpo1 and ran that triggers the release of the nuclear export signal of cargo proteins. Component of a nuclear export receptor complex composed of kpnb1, ran, snupn and xpo1 (By similarity).</text>
</comment>
<comment type="subcellular location">
    <subcellularLocation>
        <location evidence="2">Nucleus</location>
    </subcellularLocation>
    <subcellularLocation>
        <location evidence="2">Nucleus envelope</location>
    </subcellularLocation>
    <subcellularLocation>
        <location evidence="2">Cytoplasm</location>
        <location evidence="2">Cytosol</location>
    </subcellularLocation>
    <subcellularLocation>
        <location evidence="2">Cytoplasm</location>
    </subcellularLocation>
    <text evidence="2">Predominantly nuclear during interphase. Becomes dispersed throughout the cytoplasm during mitosis (By similarity).</text>
</comment>
<comment type="tissue specificity">
    <text evidence="5">Ubiquitous, with the highest expression in ovary, muscle, eye and brain.</text>
</comment>
<comment type="developmental stage">
    <text evidence="5">Expression is low at 2 hpf and starts to increase steadily after 12 hpf to reach adult levels at 72 hpf.</text>
</comment>
<comment type="similarity">
    <text evidence="4 6">Belongs to the small GTPase superfamily. Ran family.</text>
</comment>
<accession>P79735</accession>
<accession>Q7ZU75</accession>
<gene>
    <name type="primary">ran</name>
</gene>
<keyword id="KW-0963">Cytoplasm</keyword>
<keyword id="KW-0217">Developmental protein</keyword>
<keyword id="KW-0342">GTP-binding</keyword>
<keyword id="KW-0378">Hydrolase</keyword>
<keyword id="KW-0460">Magnesium</keyword>
<keyword id="KW-0479">Metal-binding</keyword>
<keyword id="KW-0547">Nucleotide-binding</keyword>
<keyword id="KW-0539">Nucleus</keyword>
<keyword id="KW-0653">Protein transport</keyword>
<keyword id="KW-1185">Reference proteome</keyword>
<keyword id="KW-0813">Transport</keyword>
<protein>
    <recommendedName>
        <fullName>GTP-binding nuclear protein Ran</fullName>
        <ecNumber evidence="2">3.6.5.-</ecNumber>
    </recommendedName>
    <alternativeName>
        <fullName>GTPase Ran</fullName>
    </alternativeName>
    <alternativeName>
        <fullName>Ras-related nuclear protein</fullName>
    </alternativeName>
</protein>
<organism>
    <name type="scientific">Danio rerio</name>
    <name type="common">Zebrafish</name>
    <name type="synonym">Brachydanio rerio</name>
    <dbReference type="NCBI Taxonomy" id="7955"/>
    <lineage>
        <taxon>Eukaryota</taxon>
        <taxon>Metazoa</taxon>
        <taxon>Chordata</taxon>
        <taxon>Craniata</taxon>
        <taxon>Vertebrata</taxon>
        <taxon>Euteleostomi</taxon>
        <taxon>Actinopterygii</taxon>
        <taxon>Neopterygii</taxon>
        <taxon>Teleostei</taxon>
        <taxon>Ostariophysi</taxon>
        <taxon>Cypriniformes</taxon>
        <taxon>Danionidae</taxon>
        <taxon>Danioninae</taxon>
        <taxon>Danio</taxon>
    </lineage>
</organism>
<name>RAN_DANRE</name>